<sequence length="259" mass="30385">MNSKIEIIKIKAKKPINPTKIPGAKYVINQYIGCQYACKYCYARFMCKWYNYGKWGSWVVVKENLPDLIKNKHIKGKIYMSSVSDAYRPIEKDFKLTRNILKNIDKRAELSILTKSDLVLRDMDLFKKFSSIEVGLTINNFEGNLKKDIEPFSPSNEKRIDALKTLYENGIKNYAFISPIIPDLIDVEYIIGETKPFTNFYYFEFLNLKASREFKHYLEQNYPESYEIISNKTAFKRYIDEVINTIKKKDIAIKGICVH</sequence>
<evidence type="ECO:0000255" key="1"/>
<evidence type="ECO:0000255" key="2">
    <source>
        <dbReference type="PROSITE-ProRule" id="PRU01266"/>
    </source>
</evidence>
<evidence type="ECO:0000305" key="3"/>
<proteinExistence type="predicted"/>
<name>Y683_METJA</name>
<accession>Q58096</accession>
<reference key="1">
    <citation type="journal article" date="1996" name="Science">
        <title>Complete genome sequence of the methanogenic archaeon, Methanococcus jannaschii.</title>
        <authorList>
            <person name="Bult C.J."/>
            <person name="White O."/>
            <person name="Olsen G.J."/>
            <person name="Zhou L."/>
            <person name="Fleischmann R.D."/>
            <person name="Sutton G.G."/>
            <person name="Blake J.A."/>
            <person name="FitzGerald L.M."/>
            <person name="Clayton R.A."/>
            <person name="Gocayne J.D."/>
            <person name="Kerlavage A.R."/>
            <person name="Dougherty B.A."/>
            <person name="Tomb J.-F."/>
            <person name="Adams M.D."/>
            <person name="Reich C.I."/>
            <person name="Overbeek R."/>
            <person name="Kirkness E.F."/>
            <person name="Weinstock K.G."/>
            <person name="Merrick J.M."/>
            <person name="Glodek A."/>
            <person name="Scott J.L."/>
            <person name="Geoghagen N.S.M."/>
            <person name="Weidman J.F."/>
            <person name="Fuhrmann J.L."/>
            <person name="Nguyen D."/>
            <person name="Utterback T.R."/>
            <person name="Kelley J.M."/>
            <person name="Peterson J.D."/>
            <person name="Sadow P.W."/>
            <person name="Hanna M.C."/>
            <person name="Cotton M.D."/>
            <person name="Roberts K.M."/>
            <person name="Hurst M.A."/>
            <person name="Kaine B.P."/>
            <person name="Borodovsky M."/>
            <person name="Klenk H.-P."/>
            <person name="Fraser C.M."/>
            <person name="Smith H.O."/>
            <person name="Woese C.R."/>
            <person name="Venter J.C."/>
        </authorList>
    </citation>
    <scope>NUCLEOTIDE SEQUENCE [LARGE SCALE GENOMIC DNA]</scope>
    <source>
        <strain>ATCC 43067 / DSM 2661 / JAL-1 / JCM 10045 / NBRC 100440</strain>
    </source>
</reference>
<feature type="chain" id="PRO_0000106987" description="Uncharacterized protein MJ0683">
    <location>
        <begin position="1"/>
        <end position="259"/>
    </location>
</feature>
<feature type="domain" description="Radical SAM core" evidence="2">
    <location>
        <begin position="19"/>
        <end position="249"/>
    </location>
</feature>
<feature type="binding site" evidence="1">
    <location>
        <position position="34"/>
    </location>
    <ligand>
        <name>[4Fe-4S] cluster</name>
        <dbReference type="ChEBI" id="CHEBI:49883"/>
        <note>4Fe-4S-S-AdoMet</note>
    </ligand>
</feature>
<feature type="binding site" evidence="1">
    <location>
        <position position="38"/>
    </location>
    <ligand>
        <name>[4Fe-4S] cluster</name>
        <dbReference type="ChEBI" id="CHEBI:49883"/>
        <note>4Fe-4S-S-AdoMet</note>
    </ligand>
</feature>
<feature type="binding site" evidence="1">
    <location>
        <position position="41"/>
    </location>
    <ligand>
        <name>[4Fe-4S] cluster</name>
        <dbReference type="ChEBI" id="CHEBI:49883"/>
        <note>4Fe-4S-S-AdoMet</note>
    </ligand>
</feature>
<protein>
    <recommendedName>
        <fullName>Uncharacterized protein MJ0683</fullName>
    </recommendedName>
</protein>
<comment type="cofactor">
    <cofactor evidence="3">
        <name>[4Fe-4S] cluster</name>
        <dbReference type="ChEBI" id="CHEBI:49883"/>
    </cofactor>
    <text evidence="3">Binds 1 [4Fe-4S] cluster. The cluster is coordinated with 3 cysteines and an exchangeable S-adenosyl-L-methionine.</text>
</comment>
<organism>
    <name type="scientific">Methanocaldococcus jannaschii (strain ATCC 43067 / DSM 2661 / JAL-1 / JCM 10045 / NBRC 100440)</name>
    <name type="common">Methanococcus jannaschii</name>
    <dbReference type="NCBI Taxonomy" id="243232"/>
    <lineage>
        <taxon>Archaea</taxon>
        <taxon>Methanobacteriati</taxon>
        <taxon>Methanobacteriota</taxon>
        <taxon>Methanomada group</taxon>
        <taxon>Methanococci</taxon>
        <taxon>Methanococcales</taxon>
        <taxon>Methanocaldococcaceae</taxon>
        <taxon>Methanocaldococcus</taxon>
    </lineage>
</organism>
<gene>
    <name type="ordered locus">MJ0683</name>
</gene>
<keyword id="KW-0004">4Fe-4S</keyword>
<keyword id="KW-0408">Iron</keyword>
<keyword id="KW-0411">Iron-sulfur</keyword>
<keyword id="KW-0479">Metal-binding</keyword>
<keyword id="KW-1185">Reference proteome</keyword>
<keyword id="KW-0949">S-adenosyl-L-methionine</keyword>
<dbReference type="EMBL" id="L77117">
    <property type="protein sequence ID" value="AAB98678.1"/>
    <property type="molecule type" value="Genomic_DNA"/>
</dbReference>
<dbReference type="PIR" id="C64385">
    <property type="entry name" value="C64385"/>
</dbReference>
<dbReference type="RefSeq" id="WP_010870188.1">
    <property type="nucleotide sequence ID" value="NC_000909.1"/>
</dbReference>
<dbReference type="SMR" id="Q58096"/>
<dbReference type="FunCoup" id="Q58096">
    <property type="interactions" value="1"/>
</dbReference>
<dbReference type="STRING" id="243232.MJ_0683"/>
<dbReference type="PaxDb" id="243232-MJ_0683"/>
<dbReference type="EnsemblBacteria" id="AAB98678">
    <property type="protein sequence ID" value="AAB98678"/>
    <property type="gene ID" value="MJ_0683"/>
</dbReference>
<dbReference type="GeneID" id="1451549"/>
<dbReference type="KEGG" id="mja:MJ_0683"/>
<dbReference type="eggNOG" id="arCOG01290">
    <property type="taxonomic scope" value="Archaea"/>
</dbReference>
<dbReference type="HOGENOM" id="CLU_015525_2_2_2"/>
<dbReference type="InParanoid" id="Q58096"/>
<dbReference type="OrthoDB" id="15538at2157"/>
<dbReference type="PhylomeDB" id="Q58096"/>
<dbReference type="Proteomes" id="UP000000805">
    <property type="component" value="Chromosome"/>
</dbReference>
<dbReference type="GO" id="GO:0051539">
    <property type="term" value="F:4 iron, 4 sulfur cluster binding"/>
    <property type="evidence" value="ECO:0007669"/>
    <property type="project" value="UniProtKB-KW"/>
</dbReference>
<dbReference type="GO" id="GO:0003824">
    <property type="term" value="F:catalytic activity"/>
    <property type="evidence" value="ECO:0007669"/>
    <property type="project" value="InterPro"/>
</dbReference>
<dbReference type="GO" id="GO:0046872">
    <property type="term" value="F:metal ion binding"/>
    <property type="evidence" value="ECO:0007669"/>
    <property type="project" value="UniProtKB-KW"/>
</dbReference>
<dbReference type="Gene3D" id="3.80.30.30">
    <property type="match status" value="1"/>
</dbReference>
<dbReference type="InterPro" id="IPR040086">
    <property type="entry name" value="MJ0683-like"/>
</dbReference>
<dbReference type="InterPro" id="IPR007197">
    <property type="entry name" value="rSAM"/>
</dbReference>
<dbReference type="PANTHER" id="PTHR43432:SF6">
    <property type="entry name" value="RADICAL SAM CORE DOMAIN-CONTAINING PROTEIN"/>
    <property type="match status" value="1"/>
</dbReference>
<dbReference type="PANTHER" id="PTHR43432">
    <property type="entry name" value="SLR0285 PROTEIN"/>
    <property type="match status" value="1"/>
</dbReference>
<dbReference type="Pfam" id="PF04055">
    <property type="entry name" value="Radical_SAM"/>
    <property type="match status" value="1"/>
</dbReference>
<dbReference type="SFLD" id="SFLDS00029">
    <property type="entry name" value="Radical_SAM"/>
    <property type="match status" value="1"/>
</dbReference>
<dbReference type="SFLD" id="SFLDG01084">
    <property type="entry name" value="Uncharacterised_Radical_SAM_Su"/>
    <property type="match status" value="1"/>
</dbReference>
<dbReference type="PROSITE" id="PS51918">
    <property type="entry name" value="RADICAL_SAM"/>
    <property type="match status" value="1"/>
</dbReference>